<organism>
    <name type="scientific">Shewanella pealeana (strain ATCC 700345 / ANG-SQ1)</name>
    <dbReference type="NCBI Taxonomy" id="398579"/>
    <lineage>
        <taxon>Bacteria</taxon>
        <taxon>Pseudomonadati</taxon>
        <taxon>Pseudomonadota</taxon>
        <taxon>Gammaproteobacteria</taxon>
        <taxon>Alteromonadales</taxon>
        <taxon>Shewanellaceae</taxon>
        <taxon>Shewanella</taxon>
    </lineage>
</organism>
<keyword id="KW-0963">Cytoplasm</keyword>
<keyword id="KW-0378">Hydrolase</keyword>
<keyword id="KW-1185">Reference proteome</keyword>
<keyword id="KW-0694">RNA-binding</keyword>
<keyword id="KW-0820">tRNA-binding</keyword>
<evidence type="ECO:0000255" key="1">
    <source>
        <dbReference type="HAMAP-Rule" id="MF_00518"/>
    </source>
</evidence>
<feature type="chain" id="PRO_1000081667" description="D-aminoacyl-tRNA deacylase">
    <location>
        <begin position="1"/>
        <end position="145"/>
    </location>
</feature>
<feature type="short sequence motif" description="Gly-cisPro motif, important for rejection of L-amino acids" evidence="1">
    <location>
        <begin position="137"/>
        <end position="138"/>
    </location>
</feature>
<sequence length="145" mass="15631">MIALIQRVSEAKVVVDGATIGEIDKGLLVLLGVEREDNIEKMQKLATKVMSYRVFSDENGKMNLNLEQAGGSLLVVSQFTLAADTGRGLRPSFSGAGTPDQARELYEAFVDFCKSKGVNTQTGQFAADMKVSLVNDGPVTFNLQV</sequence>
<proteinExistence type="inferred from homology"/>
<gene>
    <name evidence="1" type="primary">dtd</name>
    <name type="ordered locus">Spea_3906</name>
</gene>
<dbReference type="EC" id="3.1.1.96" evidence="1"/>
<dbReference type="EMBL" id="CP000851">
    <property type="protein sequence ID" value="ABV89216.1"/>
    <property type="molecule type" value="Genomic_DNA"/>
</dbReference>
<dbReference type="RefSeq" id="WP_012157097.1">
    <property type="nucleotide sequence ID" value="NC_009901.1"/>
</dbReference>
<dbReference type="SMR" id="A8H9H9"/>
<dbReference type="STRING" id="398579.Spea_3906"/>
<dbReference type="KEGG" id="spl:Spea_3906"/>
<dbReference type="eggNOG" id="COG1490">
    <property type="taxonomic scope" value="Bacteria"/>
</dbReference>
<dbReference type="HOGENOM" id="CLU_076901_1_1_6"/>
<dbReference type="OrthoDB" id="9801395at2"/>
<dbReference type="Proteomes" id="UP000002608">
    <property type="component" value="Chromosome"/>
</dbReference>
<dbReference type="GO" id="GO:0005737">
    <property type="term" value="C:cytoplasm"/>
    <property type="evidence" value="ECO:0007669"/>
    <property type="project" value="UniProtKB-SubCell"/>
</dbReference>
<dbReference type="GO" id="GO:0051500">
    <property type="term" value="F:D-tyrosyl-tRNA(Tyr) deacylase activity"/>
    <property type="evidence" value="ECO:0007669"/>
    <property type="project" value="TreeGrafter"/>
</dbReference>
<dbReference type="GO" id="GO:0106026">
    <property type="term" value="F:Gly-tRNA(Ala) deacylase activity"/>
    <property type="evidence" value="ECO:0007669"/>
    <property type="project" value="UniProtKB-UniRule"/>
</dbReference>
<dbReference type="GO" id="GO:0043908">
    <property type="term" value="F:Ser(Gly)-tRNA(Ala) hydrolase activity"/>
    <property type="evidence" value="ECO:0007669"/>
    <property type="project" value="UniProtKB-UniRule"/>
</dbReference>
<dbReference type="GO" id="GO:0000049">
    <property type="term" value="F:tRNA binding"/>
    <property type="evidence" value="ECO:0007669"/>
    <property type="project" value="UniProtKB-UniRule"/>
</dbReference>
<dbReference type="GO" id="GO:0019478">
    <property type="term" value="P:D-amino acid catabolic process"/>
    <property type="evidence" value="ECO:0007669"/>
    <property type="project" value="UniProtKB-UniRule"/>
</dbReference>
<dbReference type="CDD" id="cd00563">
    <property type="entry name" value="Dtyr_deacylase"/>
    <property type="match status" value="1"/>
</dbReference>
<dbReference type="FunFam" id="3.50.80.10:FF:000001">
    <property type="entry name" value="D-aminoacyl-tRNA deacylase"/>
    <property type="match status" value="1"/>
</dbReference>
<dbReference type="Gene3D" id="3.50.80.10">
    <property type="entry name" value="D-tyrosyl-tRNA(Tyr) deacylase"/>
    <property type="match status" value="1"/>
</dbReference>
<dbReference type="HAMAP" id="MF_00518">
    <property type="entry name" value="Deacylase_Dtd"/>
    <property type="match status" value="1"/>
</dbReference>
<dbReference type="InterPro" id="IPR003732">
    <property type="entry name" value="Daa-tRNA_deacyls_DTD"/>
</dbReference>
<dbReference type="InterPro" id="IPR023509">
    <property type="entry name" value="DTD-like_sf"/>
</dbReference>
<dbReference type="NCBIfam" id="TIGR00256">
    <property type="entry name" value="D-aminoacyl-tRNA deacylase"/>
    <property type="match status" value="1"/>
</dbReference>
<dbReference type="PANTHER" id="PTHR10472:SF5">
    <property type="entry name" value="D-AMINOACYL-TRNA DEACYLASE 1"/>
    <property type="match status" value="1"/>
</dbReference>
<dbReference type="PANTHER" id="PTHR10472">
    <property type="entry name" value="D-TYROSYL-TRNA TYR DEACYLASE"/>
    <property type="match status" value="1"/>
</dbReference>
<dbReference type="Pfam" id="PF02580">
    <property type="entry name" value="Tyr_Deacylase"/>
    <property type="match status" value="1"/>
</dbReference>
<dbReference type="SUPFAM" id="SSF69500">
    <property type="entry name" value="DTD-like"/>
    <property type="match status" value="1"/>
</dbReference>
<protein>
    <recommendedName>
        <fullName evidence="1">D-aminoacyl-tRNA deacylase</fullName>
        <shortName evidence="1">DTD</shortName>
        <ecNumber evidence="1">3.1.1.96</ecNumber>
    </recommendedName>
    <alternativeName>
        <fullName evidence="1">Gly-tRNA(Ala) deacylase</fullName>
    </alternativeName>
</protein>
<comment type="function">
    <text evidence="1">An aminoacyl-tRNA editing enzyme that deacylates mischarged D-aminoacyl-tRNAs. Also deacylates mischarged glycyl-tRNA(Ala), protecting cells against glycine mischarging by AlaRS. Acts via tRNA-based rather than protein-based catalysis; rejects L-amino acids rather than detecting D-amino acids in the active site. By recycling D-aminoacyl-tRNA to D-amino acids and free tRNA molecules, this enzyme counteracts the toxicity associated with the formation of D-aminoacyl-tRNA entities in vivo and helps enforce protein L-homochirality.</text>
</comment>
<comment type="catalytic activity">
    <reaction evidence="1">
        <text>glycyl-tRNA(Ala) + H2O = tRNA(Ala) + glycine + H(+)</text>
        <dbReference type="Rhea" id="RHEA:53744"/>
        <dbReference type="Rhea" id="RHEA-COMP:9657"/>
        <dbReference type="Rhea" id="RHEA-COMP:13640"/>
        <dbReference type="ChEBI" id="CHEBI:15377"/>
        <dbReference type="ChEBI" id="CHEBI:15378"/>
        <dbReference type="ChEBI" id="CHEBI:57305"/>
        <dbReference type="ChEBI" id="CHEBI:78442"/>
        <dbReference type="ChEBI" id="CHEBI:78522"/>
        <dbReference type="EC" id="3.1.1.96"/>
    </reaction>
</comment>
<comment type="catalytic activity">
    <reaction evidence="1">
        <text>a D-aminoacyl-tRNA + H2O = a tRNA + a D-alpha-amino acid + H(+)</text>
        <dbReference type="Rhea" id="RHEA:13953"/>
        <dbReference type="Rhea" id="RHEA-COMP:10123"/>
        <dbReference type="Rhea" id="RHEA-COMP:10124"/>
        <dbReference type="ChEBI" id="CHEBI:15377"/>
        <dbReference type="ChEBI" id="CHEBI:15378"/>
        <dbReference type="ChEBI" id="CHEBI:59871"/>
        <dbReference type="ChEBI" id="CHEBI:78442"/>
        <dbReference type="ChEBI" id="CHEBI:79333"/>
        <dbReference type="EC" id="3.1.1.96"/>
    </reaction>
</comment>
<comment type="subunit">
    <text evidence="1">Homodimer.</text>
</comment>
<comment type="subcellular location">
    <subcellularLocation>
        <location evidence="1">Cytoplasm</location>
    </subcellularLocation>
</comment>
<comment type="domain">
    <text evidence="1">A Gly-cisPro motif from one monomer fits into the active site of the other monomer to allow specific chiral rejection of L-amino acids.</text>
</comment>
<comment type="similarity">
    <text evidence="1">Belongs to the DTD family.</text>
</comment>
<reference key="1">
    <citation type="submission" date="2007-10" db="EMBL/GenBank/DDBJ databases">
        <title>Complete sequence of Shewanella pealeana ATCC 700345.</title>
        <authorList>
            <consortium name="US DOE Joint Genome Institute"/>
            <person name="Copeland A."/>
            <person name="Lucas S."/>
            <person name="Lapidus A."/>
            <person name="Barry K."/>
            <person name="Glavina del Rio T."/>
            <person name="Dalin E."/>
            <person name="Tice H."/>
            <person name="Pitluck S."/>
            <person name="Chertkov O."/>
            <person name="Brettin T."/>
            <person name="Bruce D."/>
            <person name="Detter J.C."/>
            <person name="Han C."/>
            <person name="Schmutz J."/>
            <person name="Larimer F."/>
            <person name="Land M."/>
            <person name="Hauser L."/>
            <person name="Kyrpides N."/>
            <person name="Kim E."/>
            <person name="Zhao J.-S.Z."/>
            <person name="Manno D."/>
            <person name="Hawari J."/>
            <person name="Richardson P."/>
        </authorList>
    </citation>
    <scope>NUCLEOTIDE SEQUENCE [LARGE SCALE GENOMIC DNA]</scope>
    <source>
        <strain>ATCC 700345 / ANG-SQ1</strain>
    </source>
</reference>
<accession>A8H9H9</accession>
<name>DTD_SHEPA</name>